<dbReference type="EC" id="3.2.1.18" evidence="6 7"/>
<dbReference type="EMBL" id="AY258421">
    <property type="protein sequence ID" value="AAP81169.1"/>
    <property type="molecule type" value="mRNA"/>
</dbReference>
<dbReference type="EMBL" id="AK034236">
    <property type="protein sequence ID" value="BAC28641.1"/>
    <property type="molecule type" value="mRNA"/>
</dbReference>
<dbReference type="EMBL" id="BC070438">
    <property type="protein sequence ID" value="AAH70438.1"/>
    <property type="molecule type" value="mRNA"/>
</dbReference>
<dbReference type="CCDS" id="CCDS15199.1">
    <molecule id="Q8BZL1-2"/>
</dbReference>
<dbReference type="CCDS" id="CCDS78660.1">
    <molecule id="Q8BZL1-1"/>
</dbReference>
<dbReference type="RefSeq" id="NP_001297698.1">
    <molecule id="Q8BZL1-1"/>
    <property type="nucleotide sequence ID" value="NM_001310769.1"/>
</dbReference>
<dbReference type="RefSeq" id="NP_776133.1">
    <molecule id="Q8BZL1-2"/>
    <property type="nucleotide sequence ID" value="NM_173772.3"/>
</dbReference>
<dbReference type="SMR" id="Q8BZL1"/>
<dbReference type="FunCoup" id="Q8BZL1">
    <property type="interactions" value="218"/>
</dbReference>
<dbReference type="STRING" id="10090.ENSMUSP00000140127"/>
<dbReference type="ChEMBL" id="CHEMBL4106170"/>
<dbReference type="ChEMBL" id="CHEMBL4106181"/>
<dbReference type="ChEMBL" id="CHEMBL4296071"/>
<dbReference type="CAZy" id="GH33">
    <property type="family name" value="Glycoside Hydrolase Family 33"/>
</dbReference>
<dbReference type="iPTMnet" id="Q8BZL1"/>
<dbReference type="PhosphoSitePlus" id="Q8BZL1"/>
<dbReference type="SwissPalm" id="Q8BZL1"/>
<dbReference type="PaxDb" id="10090-ENSMUSP00000051151"/>
<dbReference type="ProteomicsDB" id="287391">
    <molecule id="Q8BZL1-2"/>
</dbReference>
<dbReference type="ProteomicsDB" id="287392">
    <molecule id="Q8BZL1-1"/>
</dbReference>
<dbReference type="Antibodypedia" id="34580">
    <property type="antibodies" value="164 antibodies from 24 providers"/>
</dbReference>
<dbReference type="DNASU" id="241159"/>
<dbReference type="Ensembl" id="ENSMUST00000050890.8">
    <molecule id="Q8BZL1-2"/>
    <property type="protein sequence ID" value="ENSMUSP00000051151.7"/>
    <property type="gene ID" value="ENSMUSG00000034000.16"/>
</dbReference>
<dbReference type="Ensembl" id="ENSMUST00000190212.7">
    <molecule id="Q8BZL1-1"/>
    <property type="protein sequence ID" value="ENSMUSP00000140127.2"/>
    <property type="gene ID" value="ENSMUSG00000034000.16"/>
</dbReference>
<dbReference type="GeneID" id="241159"/>
<dbReference type="KEGG" id="mmu:241159"/>
<dbReference type="UCSC" id="uc007ceu.1">
    <molecule id="Q8BZL1-2"/>
    <property type="organism name" value="mouse"/>
</dbReference>
<dbReference type="AGR" id="MGI:2661364"/>
<dbReference type="CTD" id="129807"/>
<dbReference type="MGI" id="MGI:2661364">
    <property type="gene designation" value="Neu4"/>
</dbReference>
<dbReference type="VEuPathDB" id="HostDB:ENSMUSG00000034000"/>
<dbReference type="eggNOG" id="ENOG502QSFT">
    <property type="taxonomic scope" value="Eukaryota"/>
</dbReference>
<dbReference type="GeneTree" id="ENSGT00950000182944"/>
<dbReference type="HOGENOM" id="CLU_024620_2_1_1"/>
<dbReference type="InParanoid" id="Q8BZL1"/>
<dbReference type="OrthoDB" id="2739686at2759"/>
<dbReference type="TreeFam" id="TF331063"/>
<dbReference type="Reactome" id="R-MMU-4085001">
    <property type="pathway name" value="Sialic acid metabolism"/>
</dbReference>
<dbReference type="Reactome" id="R-MMU-9840310">
    <property type="pathway name" value="Glycosphingolipid catabolism"/>
</dbReference>
<dbReference type="BioGRID-ORCS" id="241159">
    <property type="hits" value="1 hit in 79 CRISPR screens"/>
</dbReference>
<dbReference type="PRO" id="PR:Q8BZL1"/>
<dbReference type="Proteomes" id="UP000000589">
    <property type="component" value="Chromosome 1"/>
</dbReference>
<dbReference type="RNAct" id="Q8BZL1">
    <property type="molecule type" value="protein"/>
</dbReference>
<dbReference type="Bgee" id="ENSMUSG00000034000">
    <property type="expression patterns" value="Expressed in striatum and 8 other cell types or tissues"/>
</dbReference>
<dbReference type="ExpressionAtlas" id="Q8BZL1">
    <property type="expression patterns" value="baseline and differential"/>
</dbReference>
<dbReference type="GO" id="GO:0005789">
    <property type="term" value="C:endoplasmic reticulum membrane"/>
    <property type="evidence" value="ECO:0007669"/>
    <property type="project" value="UniProtKB-SubCell"/>
</dbReference>
<dbReference type="GO" id="GO:0043202">
    <property type="term" value="C:lysosomal lumen"/>
    <property type="evidence" value="ECO:0007669"/>
    <property type="project" value="UniProtKB-SubCell"/>
</dbReference>
<dbReference type="GO" id="GO:0005764">
    <property type="term" value="C:lysosome"/>
    <property type="evidence" value="ECO:0000250"/>
    <property type="project" value="UniProtKB"/>
</dbReference>
<dbReference type="GO" id="GO:0005743">
    <property type="term" value="C:mitochondrial inner membrane"/>
    <property type="evidence" value="ECO:0007669"/>
    <property type="project" value="UniProtKB-SubCell"/>
</dbReference>
<dbReference type="GO" id="GO:0005741">
    <property type="term" value="C:mitochondrial outer membrane"/>
    <property type="evidence" value="ECO:0007669"/>
    <property type="project" value="UniProtKB-SubCell"/>
</dbReference>
<dbReference type="GO" id="GO:0005739">
    <property type="term" value="C:mitochondrion"/>
    <property type="evidence" value="ECO:0007005"/>
    <property type="project" value="MGI"/>
</dbReference>
<dbReference type="GO" id="GO:0043005">
    <property type="term" value="C:neuron projection"/>
    <property type="evidence" value="ECO:0000314"/>
    <property type="project" value="UniProtKB"/>
</dbReference>
<dbReference type="GO" id="GO:0019866">
    <property type="term" value="C:organelle inner membrane"/>
    <property type="evidence" value="ECO:0000250"/>
    <property type="project" value="UniProtKB"/>
</dbReference>
<dbReference type="GO" id="GO:0005886">
    <property type="term" value="C:plasma membrane"/>
    <property type="evidence" value="ECO:0000314"/>
    <property type="project" value="UniProtKB"/>
</dbReference>
<dbReference type="GO" id="GO:0004308">
    <property type="term" value="F:exo-alpha-sialidase activity"/>
    <property type="evidence" value="ECO:0000314"/>
    <property type="project" value="UniProtKB"/>
</dbReference>
<dbReference type="GO" id="GO:0006689">
    <property type="term" value="P:ganglioside catabolic process"/>
    <property type="evidence" value="ECO:0000314"/>
    <property type="project" value="UniProtKB"/>
</dbReference>
<dbReference type="GO" id="GO:0006516">
    <property type="term" value="P:glycoprotein catabolic process"/>
    <property type="evidence" value="ECO:0000314"/>
    <property type="project" value="UniProtKB"/>
</dbReference>
<dbReference type="GO" id="GO:0010977">
    <property type="term" value="P:negative regulation of neuron projection development"/>
    <property type="evidence" value="ECO:0000314"/>
    <property type="project" value="UniProtKB"/>
</dbReference>
<dbReference type="GO" id="GO:0009313">
    <property type="term" value="P:oligosaccharide catabolic process"/>
    <property type="evidence" value="ECO:0000250"/>
    <property type="project" value="UniProtKB"/>
</dbReference>
<dbReference type="CDD" id="cd15482">
    <property type="entry name" value="Sialidase_non-viral"/>
    <property type="match status" value="1"/>
</dbReference>
<dbReference type="FunFam" id="2.120.10.10:FF:000005">
    <property type="entry name" value="Neuraminidase 4"/>
    <property type="match status" value="1"/>
</dbReference>
<dbReference type="FunFam" id="2.120.10.10:FF:000006">
    <property type="entry name" value="Sialidase 4"/>
    <property type="match status" value="1"/>
</dbReference>
<dbReference type="Gene3D" id="2.120.10.10">
    <property type="match status" value="2"/>
</dbReference>
<dbReference type="InterPro" id="IPR011040">
    <property type="entry name" value="Sialidase"/>
</dbReference>
<dbReference type="InterPro" id="IPR026856">
    <property type="entry name" value="Sialidase_fam"/>
</dbReference>
<dbReference type="InterPro" id="IPR036278">
    <property type="entry name" value="Sialidase_sf"/>
</dbReference>
<dbReference type="PANTHER" id="PTHR10628">
    <property type="entry name" value="SIALIDASE"/>
    <property type="match status" value="1"/>
</dbReference>
<dbReference type="PANTHER" id="PTHR10628:SF22">
    <property type="entry name" value="SIALIDASE-4"/>
    <property type="match status" value="1"/>
</dbReference>
<dbReference type="Pfam" id="PF13088">
    <property type="entry name" value="BNR_2"/>
    <property type="match status" value="1"/>
</dbReference>
<dbReference type="SUPFAM" id="SSF50939">
    <property type="entry name" value="Sialidases"/>
    <property type="match status" value="1"/>
</dbReference>
<accession>Q8BZL1</accession>
<accession>Q6NS66</accession>
<protein>
    <recommendedName>
        <fullName>Sialidase-4</fullName>
        <ecNumber evidence="6 7">3.2.1.18</ecNumber>
    </recommendedName>
    <alternativeName>
        <fullName>N-acetyl-alpha-neuraminidase 4</fullName>
    </alternativeName>
    <alternativeName>
        <fullName>Neuraminidase 4</fullName>
    </alternativeName>
</protein>
<keyword id="KW-0025">Alternative splicing</keyword>
<keyword id="KW-0119">Carbohydrate metabolism</keyword>
<keyword id="KW-1003">Cell membrane</keyword>
<keyword id="KW-0966">Cell projection</keyword>
<keyword id="KW-0256">Endoplasmic reticulum</keyword>
<keyword id="KW-0326">Glycosidase</keyword>
<keyword id="KW-0378">Hydrolase</keyword>
<keyword id="KW-0442">Lipid degradation</keyword>
<keyword id="KW-0443">Lipid metabolism</keyword>
<keyword id="KW-0458">Lysosome</keyword>
<keyword id="KW-0472">Membrane</keyword>
<keyword id="KW-0492">Microsome</keyword>
<keyword id="KW-0496">Mitochondrion</keyword>
<keyword id="KW-0999">Mitochondrion inner membrane</keyword>
<keyword id="KW-1000">Mitochondrion outer membrane</keyword>
<keyword id="KW-1185">Reference proteome</keyword>
<keyword id="KW-0677">Repeat</keyword>
<gene>
    <name type="primary">Neu4</name>
</gene>
<sequence length="478" mass="52426">MGPTRVPRRTVLFQRERTGLTYRVPALLCVPPRPTLLAFAEQRLSPDDSHAHRLVLRRGTLTRGSVRWGTLSVLETAVLEEHRSMNPCPVLDEHSGTIFLFFIAVLGHTPEAVQIATGKNAARLCCVTSCDAGLTWGSVRDLTEEAIGAALQDWATFAVGPGHGVQLRSGRLLVPAYTYHVDRRECFGKICWTSPHSLAFYSDDHGISWHCGGLVPNLRSGECQLAAVDGDFLYCNARSPLGNRVQALSADEGTSFLPGELVPTLAETARGCQGSIVGFLAPPSIEPQDDRWTGSPRNTPHSPCFNLRVQESSGEGARGLLERWMPRLPLCYPQSRSPENHGLEPGSDGDKTSWTPECPMSSDSMLQSPTWLLYSHPAGRRARLHMGIYLSRSPLDPHSWTEPWVIYEGPSGYSDLAFLGPMPGASLVFACLFESGTRTSYEDISFCLFSLADVLENVPTGLEMLSLRDKAQGHCWPS</sequence>
<reference key="1">
    <citation type="journal article" date="2003" name="Gene">
        <title>Identification and expression of Neu4, a novel murine sialidase.</title>
        <authorList>
            <person name="Comelli E.M."/>
            <person name="Amado M."/>
            <person name="Lustig S.R."/>
            <person name="Paulson J.C."/>
        </authorList>
    </citation>
    <scope>NUCLEOTIDE SEQUENCE [MRNA] (ISOFORM 2)</scope>
    <scope>TISSUE SPECIFICITY</scope>
    <source>
        <strain>C57BL/6J</strain>
        <tissue>Brain</tissue>
    </source>
</reference>
<reference key="2">
    <citation type="journal article" date="2005" name="Science">
        <title>The transcriptional landscape of the mammalian genome.</title>
        <authorList>
            <person name="Carninci P."/>
            <person name="Kasukawa T."/>
            <person name="Katayama S."/>
            <person name="Gough J."/>
            <person name="Frith M.C."/>
            <person name="Maeda N."/>
            <person name="Oyama R."/>
            <person name="Ravasi T."/>
            <person name="Lenhard B."/>
            <person name="Wells C."/>
            <person name="Kodzius R."/>
            <person name="Shimokawa K."/>
            <person name="Bajic V.B."/>
            <person name="Brenner S.E."/>
            <person name="Batalov S."/>
            <person name="Forrest A.R."/>
            <person name="Zavolan M."/>
            <person name="Davis M.J."/>
            <person name="Wilming L.G."/>
            <person name="Aidinis V."/>
            <person name="Allen J.E."/>
            <person name="Ambesi-Impiombato A."/>
            <person name="Apweiler R."/>
            <person name="Aturaliya R.N."/>
            <person name="Bailey T.L."/>
            <person name="Bansal M."/>
            <person name="Baxter L."/>
            <person name="Beisel K.W."/>
            <person name="Bersano T."/>
            <person name="Bono H."/>
            <person name="Chalk A.M."/>
            <person name="Chiu K.P."/>
            <person name="Choudhary V."/>
            <person name="Christoffels A."/>
            <person name="Clutterbuck D.R."/>
            <person name="Crowe M.L."/>
            <person name="Dalla E."/>
            <person name="Dalrymple B.P."/>
            <person name="de Bono B."/>
            <person name="Della Gatta G."/>
            <person name="di Bernardo D."/>
            <person name="Down T."/>
            <person name="Engstrom P."/>
            <person name="Fagiolini M."/>
            <person name="Faulkner G."/>
            <person name="Fletcher C.F."/>
            <person name="Fukushima T."/>
            <person name="Furuno M."/>
            <person name="Futaki S."/>
            <person name="Gariboldi M."/>
            <person name="Georgii-Hemming P."/>
            <person name="Gingeras T.R."/>
            <person name="Gojobori T."/>
            <person name="Green R.E."/>
            <person name="Gustincich S."/>
            <person name="Harbers M."/>
            <person name="Hayashi Y."/>
            <person name="Hensch T.K."/>
            <person name="Hirokawa N."/>
            <person name="Hill D."/>
            <person name="Huminiecki L."/>
            <person name="Iacono M."/>
            <person name="Ikeo K."/>
            <person name="Iwama A."/>
            <person name="Ishikawa T."/>
            <person name="Jakt M."/>
            <person name="Kanapin A."/>
            <person name="Katoh M."/>
            <person name="Kawasawa Y."/>
            <person name="Kelso J."/>
            <person name="Kitamura H."/>
            <person name="Kitano H."/>
            <person name="Kollias G."/>
            <person name="Krishnan S.P."/>
            <person name="Kruger A."/>
            <person name="Kummerfeld S.K."/>
            <person name="Kurochkin I.V."/>
            <person name="Lareau L.F."/>
            <person name="Lazarevic D."/>
            <person name="Lipovich L."/>
            <person name="Liu J."/>
            <person name="Liuni S."/>
            <person name="McWilliam S."/>
            <person name="Madan Babu M."/>
            <person name="Madera M."/>
            <person name="Marchionni L."/>
            <person name="Matsuda H."/>
            <person name="Matsuzawa S."/>
            <person name="Miki H."/>
            <person name="Mignone F."/>
            <person name="Miyake S."/>
            <person name="Morris K."/>
            <person name="Mottagui-Tabar S."/>
            <person name="Mulder N."/>
            <person name="Nakano N."/>
            <person name="Nakauchi H."/>
            <person name="Ng P."/>
            <person name="Nilsson R."/>
            <person name="Nishiguchi S."/>
            <person name="Nishikawa S."/>
            <person name="Nori F."/>
            <person name="Ohara O."/>
            <person name="Okazaki Y."/>
            <person name="Orlando V."/>
            <person name="Pang K.C."/>
            <person name="Pavan W.J."/>
            <person name="Pavesi G."/>
            <person name="Pesole G."/>
            <person name="Petrovsky N."/>
            <person name="Piazza S."/>
            <person name="Reed J."/>
            <person name="Reid J.F."/>
            <person name="Ring B.Z."/>
            <person name="Ringwald M."/>
            <person name="Rost B."/>
            <person name="Ruan Y."/>
            <person name="Salzberg S.L."/>
            <person name="Sandelin A."/>
            <person name="Schneider C."/>
            <person name="Schoenbach C."/>
            <person name="Sekiguchi K."/>
            <person name="Semple C.A."/>
            <person name="Seno S."/>
            <person name="Sessa L."/>
            <person name="Sheng Y."/>
            <person name="Shibata Y."/>
            <person name="Shimada H."/>
            <person name="Shimada K."/>
            <person name="Silva D."/>
            <person name="Sinclair B."/>
            <person name="Sperling S."/>
            <person name="Stupka E."/>
            <person name="Sugiura K."/>
            <person name="Sultana R."/>
            <person name="Takenaka Y."/>
            <person name="Taki K."/>
            <person name="Tammoja K."/>
            <person name="Tan S.L."/>
            <person name="Tang S."/>
            <person name="Taylor M.S."/>
            <person name="Tegner J."/>
            <person name="Teichmann S.A."/>
            <person name="Ueda H.R."/>
            <person name="van Nimwegen E."/>
            <person name="Verardo R."/>
            <person name="Wei C.L."/>
            <person name="Yagi K."/>
            <person name="Yamanishi H."/>
            <person name="Zabarovsky E."/>
            <person name="Zhu S."/>
            <person name="Zimmer A."/>
            <person name="Hide W."/>
            <person name="Bult C."/>
            <person name="Grimmond S.M."/>
            <person name="Teasdale R.D."/>
            <person name="Liu E.T."/>
            <person name="Brusic V."/>
            <person name="Quackenbush J."/>
            <person name="Wahlestedt C."/>
            <person name="Mattick J.S."/>
            <person name="Hume D.A."/>
            <person name="Kai C."/>
            <person name="Sasaki D."/>
            <person name="Tomaru Y."/>
            <person name="Fukuda S."/>
            <person name="Kanamori-Katayama M."/>
            <person name="Suzuki M."/>
            <person name="Aoki J."/>
            <person name="Arakawa T."/>
            <person name="Iida J."/>
            <person name="Imamura K."/>
            <person name="Itoh M."/>
            <person name="Kato T."/>
            <person name="Kawaji H."/>
            <person name="Kawagashira N."/>
            <person name="Kawashima T."/>
            <person name="Kojima M."/>
            <person name="Kondo S."/>
            <person name="Konno H."/>
            <person name="Nakano K."/>
            <person name="Ninomiya N."/>
            <person name="Nishio T."/>
            <person name="Okada M."/>
            <person name="Plessy C."/>
            <person name="Shibata K."/>
            <person name="Shiraki T."/>
            <person name="Suzuki S."/>
            <person name="Tagami M."/>
            <person name="Waki K."/>
            <person name="Watahiki A."/>
            <person name="Okamura-Oho Y."/>
            <person name="Suzuki H."/>
            <person name="Kawai J."/>
            <person name="Hayashizaki Y."/>
        </authorList>
    </citation>
    <scope>NUCLEOTIDE SEQUENCE [LARGE SCALE MRNA] (ISOFORM 1)</scope>
    <source>
        <strain>C57BL/6J</strain>
        <tissue>Diencephalon</tissue>
    </source>
</reference>
<reference key="3">
    <citation type="journal article" date="2004" name="Genome Res.">
        <title>The status, quality, and expansion of the NIH full-length cDNA project: the Mammalian Gene Collection (MGC).</title>
        <authorList>
            <consortium name="The MGC Project Team"/>
        </authorList>
    </citation>
    <scope>NUCLEOTIDE SEQUENCE [LARGE SCALE MRNA] (ISOFORM 1)</scope>
    <source>
        <strain>C57BL/6J</strain>
        <tissue>Brain</tissue>
    </source>
</reference>
<reference key="4">
    <citation type="journal article" date="2009" name="J. Biol. Chem.">
        <title>Developmental change of sialidase neu4 expression in murine brain and its involvement in the regulation of neuronal cell differentiation.</title>
        <authorList>
            <person name="Shiozaki K."/>
            <person name="Koseki K."/>
            <person name="Yamaguchi K."/>
            <person name="Shiozaki M."/>
            <person name="Narimatsu H."/>
            <person name="Miyagi T."/>
        </authorList>
    </citation>
    <scope>FUNCTION</scope>
    <scope>CATALYTIC ACTIVITY</scope>
    <scope>TISSUE SPECIFICITY</scope>
    <scope>DEVELOPMENTAL STAGE</scope>
</reference>
<reference key="5">
    <citation type="journal article" date="2012" name="J. Biol. Chem.">
        <title>Sialidase NEU4 hydrolyzes polysialic acids of neural cell adhesion molecules and negatively regulates neurite formation by hippocampal neurons.</title>
        <authorList>
            <person name="Takahashi K."/>
            <person name="Mitoma J."/>
            <person name="Hosono M."/>
            <person name="Shiozaki K."/>
            <person name="Sato C."/>
            <person name="Yamaguchi K."/>
            <person name="Kitajima K."/>
            <person name="Higashi H."/>
            <person name="Nitta K."/>
            <person name="Shima H."/>
            <person name="Miyagi T."/>
        </authorList>
    </citation>
    <scope>FUNCTION</scope>
    <scope>CATALYTIC ACTIVITY</scope>
    <scope>BIOPHYSICOCHEMICAL PROPERTIES</scope>
    <scope>SUBCELLULAR LOCATION</scope>
    <scope>TISSUE SPECIFICITY</scope>
    <scope>INDUCTION</scope>
</reference>
<evidence type="ECO:0000250" key="1"/>
<evidence type="ECO:0000250" key="2">
    <source>
        <dbReference type="UniProtKB" id="Q8WWR8"/>
    </source>
</evidence>
<evidence type="ECO:0000255" key="3"/>
<evidence type="ECO:0000256" key="4">
    <source>
        <dbReference type="SAM" id="MobiDB-lite"/>
    </source>
</evidence>
<evidence type="ECO:0000269" key="5">
    <source>
    </source>
</evidence>
<evidence type="ECO:0000269" key="6">
    <source>
    </source>
</evidence>
<evidence type="ECO:0000269" key="7">
    <source>
    </source>
</evidence>
<evidence type="ECO:0000303" key="8">
    <source>
    </source>
</evidence>
<evidence type="ECO:0000305" key="9"/>
<evidence type="ECO:0000305" key="10">
    <source>
    </source>
</evidence>
<comment type="function">
    <text evidence="2 6 7">Exo-alpha-sialidase that catalyzes the hydrolytic cleavage of the terminal sialic acid (N-acetylneuraminic acid, Neu5Ac) of a glycan moiety in the catabolism of glycolipids, glycoproteins and oligosacharides. Efficiently hydrolyzes gangliosides including alpha-(2-&gt;3)-sialylated GD1a and GM3 and alpha-(2-&gt;8)-sialylated GD3 (PubMed:19506080, PubMed:22393058). Hydrolyzes poly-alpha-(2-&gt;8)-sialylated neural cell adhesion molecule NCAM1 likely at growth cones, suppressing neurite outgrowth in hippocampal neurons (PubMed:19506080, PubMed:22393058). May desialylate sialyl Lewis A and X antigens at the cell surface, down-regulating these glycan epitopes recognized by SELE/E selectin in the initiation of cell adhesion and extravasation (By similarity). Has sialidase activity toward mucin, fetuin and sialyllactose (PubMed:19506080, PubMed:22393058).</text>
</comment>
<comment type="catalytic activity">
    <reaction evidence="6 7">
        <text>Hydrolysis of alpha-(2-&gt;3)-, alpha-(2-&gt;6)-, alpha-(2-&gt;8)- glycosidic linkages of terminal sialic acid residues in oligosaccharides, glycoproteins, glycolipids, colominic acid and synthetic substrates.</text>
        <dbReference type="EC" id="3.2.1.18"/>
    </reaction>
</comment>
<comment type="catalytic activity">
    <reaction evidence="6">
        <text>a ganglioside GM3 + H2O = a beta-D-galactosyl-(1-&gt;4)-beta-D-glucosyl-(1&lt;-&gt;1)-ceramide + N-acetylneuraminate</text>
        <dbReference type="Rhea" id="RHEA:48136"/>
        <dbReference type="ChEBI" id="CHEBI:15377"/>
        <dbReference type="ChEBI" id="CHEBI:35418"/>
        <dbReference type="ChEBI" id="CHEBI:79208"/>
        <dbReference type="ChEBI" id="CHEBI:79210"/>
    </reaction>
    <physiologicalReaction direction="left-to-right" evidence="10">
        <dbReference type="Rhea" id="RHEA:48137"/>
    </physiologicalReaction>
</comment>
<comment type="catalytic activity">
    <reaction evidence="2">
        <text>a ganglioside GM3 (d18:1(4E)) + H2O = a beta-D-Gal-(1-&gt;4)-beta-D-Glc-(1&lt;-&gt;1)-Cer(d18:1(4E)) + N-acetylneuraminate</text>
        <dbReference type="Rhea" id="RHEA:47900"/>
        <dbReference type="ChEBI" id="CHEBI:15377"/>
        <dbReference type="ChEBI" id="CHEBI:17950"/>
        <dbReference type="ChEBI" id="CHEBI:35418"/>
        <dbReference type="ChEBI" id="CHEBI:60065"/>
    </reaction>
    <physiologicalReaction direction="left-to-right" evidence="2">
        <dbReference type="Rhea" id="RHEA:47901"/>
    </physiologicalReaction>
</comment>
<comment type="catalytic activity">
    <reaction evidence="2">
        <text>a ganglioside GM2 + H2O = a ganglioside GA2 + N-acetylneuraminate</text>
        <dbReference type="Rhea" id="RHEA:48172"/>
        <dbReference type="ChEBI" id="CHEBI:15377"/>
        <dbReference type="ChEBI" id="CHEBI:35418"/>
        <dbReference type="ChEBI" id="CHEBI:79218"/>
        <dbReference type="ChEBI" id="CHEBI:90085"/>
    </reaction>
    <physiologicalReaction direction="left-to-right" evidence="2">
        <dbReference type="Rhea" id="RHEA:48173"/>
    </physiologicalReaction>
</comment>
<comment type="catalytic activity">
    <reaction evidence="2">
        <text>a ganglioside GM2 (d18:1(4E)) + H2O = a ganglioside GA2 (d18:1(4E)) + N-acetylneuraminate</text>
        <dbReference type="Rhea" id="RHEA:48068"/>
        <dbReference type="ChEBI" id="CHEBI:15377"/>
        <dbReference type="ChEBI" id="CHEBI:27731"/>
        <dbReference type="ChEBI" id="CHEBI:35418"/>
        <dbReference type="ChEBI" id="CHEBI:71502"/>
    </reaction>
    <physiologicalReaction direction="left-to-right" evidence="2">
        <dbReference type="Rhea" id="RHEA:48069"/>
    </physiologicalReaction>
</comment>
<comment type="catalytic activity">
    <reaction evidence="2">
        <text>a ganglioside GD1a + H2O = a ganglioside GM1 + N-acetylneuraminate</text>
        <dbReference type="Rhea" id="RHEA:47832"/>
        <dbReference type="ChEBI" id="CHEBI:15377"/>
        <dbReference type="ChEBI" id="CHEBI:35418"/>
        <dbReference type="ChEBI" id="CHEBI:82637"/>
        <dbReference type="ChEBI" id="CHEBI:82639"/>
    </reaction>
    <physiologicalReaction direction="left-to-right" evidence="2">
        <dbReference type="Rhea" id="RHEA:47833"/>
    </physiologicalReaction>
</comment>
<comment type="catalytic activity">
    <reaction evidence="2">
        <text>a ganglioside GD1a (d18:1(4E)) + H2O = a ganglioside GM1 (d18:1(4E)) + N-acetylneuraminate</text>
        <dbReference type="Rhea" id="RHEA:47856"/>
        <dbReference type="ChEBI" id="CHEBI:15377"/>
        <dbReference type="ChEBI" id="CHEBI:35418"/>
        <dbReference type="ChEBI" id="CHEBI:77709"/>
        <dbReference type="ChEBI" id="CHEBI:78445"/>
    </reaction>
    <physiologicalReaction direction="left-to-right" evidence="2">
        <dbReference type="Rhea" id="RHEA:47857"/>
    </physiologicalReaction>
</comment>
<comment type="catalytic activity">
    <reaction evidence="6">
        <text>a ganglioside GD3 + H2O = a ganglioside GM3 + N-acetylneuraminate</text>
        <dbReference type="Rhea" id="RHEA:48120"/>
        <dbReference type="ChEBI" id="CHEBI:15377"/>
        <dbReference type="ChEBI" id="CHEBI:35418"/>
        <dbReference type="ChEBI" id="CHEBI:79210"/>
        <dbReference type="ChEBI" id="CHEBI:79214"/>
    </reaction>
    <physiologicalReaction direction="left-to-right" evidence="10">
        <dbReference type="Rhea" id="RHEA:48121"/>
    </physiologicalReaction>
</comment>
<comment type="catalytic activity">
    <reaction evidence="2">
        <text>a ganglioside GD3 (d18:1(4E)) + H2O = a ganglioside GM3 (d18:1(4E)) + N-acetylneuraminate</text>
        <dbReference type="Rhea" id="RHEA:48124"/>
        <dbReference type="ChEBI" id="CHEBI:15377"/>
        <dbReference type="ChEBI" id="CHEBI:35418"/>
        <dbReference type="ChEBI" id="CHEBI:60065"/>
        <dbReference type="ChEBI" id="CHEBI:78436"/>
    </reaction>
    <physiologicalReaction direction="left-to-right" evidence="2">
        <dbReference type="Rhea" id="RHEA:48125"/>
    </physiologicalReaction>
</comment>
<comment type="biophysicochemical properties">
    <phDependence>
        <text evidence="7">Optimum pH is 4.4-6.5.</text>
    </phDependence>
</comment>
<comment type="subcellular location">
    <subcellularLocation>
        <location evidence="7">Cell membrane</location>
        <topology>Peripheral membrane protein</topology>
    </subcellularLocation>
    <subcellularLocation>
        <location evidence="2">Endoplasmic reticulum membrane</location>
        <topology>Peripheral membrane protein</topology>
    </subcellularLocation>
    <subcellularLocation>
        <location evidence="2">Microsome membrane</location>
        <topology>Peripheral membrane protein</topology>
    </subcellularLocation>
    <subcellularLocation>
        <location evidence="2">Mitochondrion inner membrane</location>
        <topology>Peripheral membrane protein</topology>
    </subcellularLocation>
    <subcellularLocation>
        <location evidence="2">Mitochondrion outer membrane</location>
        <topology>Peripheral membrane protein</topology>
    </subcellularLocation>
    <subcellularLocation>
        <location evidence="7">Cell projection</location>
        <location evidence="7">Neuron projection</location>
    </subcellularLocation>
    <subcellularLocation>
        <location evidence="2">Lysosome lumen</location>
    </subcellularLocation>
</comment>
<comment type="alternative products">
    <event type="alternative splicing"/>
    <isoform>
        <id>Q8BZL1-2</id>
        <name>1</name>
        <sequence type="displayed"/>
    </isoform>
    <isoform>
        <id>Q8BZL1-1</id>
        <name>2</name>
        <sequence type="described" ref="VSP_037492"/>
    </isoform>
</comment>
<comment type="tissue specificity">
    <text evidence="5 6 7">Highly expressed in brain, particularly in hippocampus, and at lower levels in liver and spleen. Expressed in hippocampal neurons (at protein level).</text>
</comment>
<comment type="developmental stage">
    <text evidence="6">Expressed at low levels in embryonic brain, then rapidly up-regulated after birth reaching a maximum at postnatal day 14, followed by a decrease.</text>
</comment>
<comment type="induction">
    <text evidence="7">Down-regulated upon neuron differentiation.</text>
</comment>
<comment type="similarity">
    <text evidence="9">Belongs to the glycosyl hydrolase 33 family.</text>
</comment>
<name>NEUR4_MOUSE</name>
<feature type="chain" id="PRO_0000208907" description="Sialidase-4">
    <location>
        <begin position="1"/>
        <end position="478"/>
    </location>
</feature>
<feature type="repeat" description="BNR 1">
    <location>
        <begin position="127"/>
        <end position="138"/>
    </location>
</feature>
<feature type="repeat" description="BNR 2">
    <location>
        <begin position="200"/>
        <end position="211"/>
    </location>
</feature>
<feature type="repeat" description="BNR 3">
    <location>
        <begin position="247"/>
        <end position="258"/>
    </location>
</feature>
<feature type="region of interest" description="Disordered" evidence="4">
    <location>
        <begin position="285"/>
        <end position="307"/>
    </location>
</feature>
<feature type="region of interest" description="Disordered" evidence="4">
    <location>
        <begin position="335"/>
        <end position="359"/>
    </location>
</feature>
<feature type="short sequence motif" description="FRIP motif">
    <location>
        <begin position="22"/>
        <end position="25"/>
    </location>
</feature>
<feature type="active site" description="Proton acceptor" evidence="1">
    <location>
        <position position="47"/>
    </location>
</feature>
<feature type="active site" description="Proton acceptor" evidence="1">
    <location>
        <position position="48"/>
    </location>
</feature>
<feature type="active site" description="Nucleophile" evidence="1">
    <location>
        <position position="413"/>
    </location>
</feature>
<feature type="active site" evidence="3">
    <location>
        <position position="434"/>
    </location>
</feature>
<feature type="binding site" evidence="1">
    <location>
        <position position="23"/>
    </location>
    <ligand>
        <name>substrate</name>
    </ligand>
</feature>
<feature type="binding site" evidence="1">
    <location>
        <position position="43"/>
    </location>
    <ligand>
        <name>substrate</name>
    </ligand>
</feature>
<feature type="binding site" evidence="1">
    <location>
        <position position="177"/>
    </location>
    <ligand>
        <name>substrate</name>
    </ligand>
</feature>
<feature type="binding site" evidence="1">
    <location>
        <position position="179"/>
    </location>
    <ligand>
        <name>substrate</name>
    </ligand>
</feature>
<feature type="binding site" evidence="1">
    <location>
        <position position="222"/>
    </location>
    <ligand>
        <name>substrate</name>
    </ligand>
</feature>
<feature type="binding site" evidence="1">
    <location>
        <position position="238"/>
    </location>
    <ligand>
        <name>substrate</name>
    </ligand>
</feature>
<feature type="binding site" evidence="1">
    <location>
        <position position="383"/>
    </location>
    <ligand>
        <name>substrate</name>
    </ligand>
</feature>
<feature type="splice variant" id="VSP_037492" description="In isoform 2." evidence="8">
    <original>M</original>
    <variation>METAGAPFCFHVDSLVPCSYWKVM</variation>
    <location>
        <position position="1"/>
    </location>
</feature>
<organism>
    <name type="scientific">Mus musculus</name>
    <name type="common">Mouse</name>
    <dbReference type="NCBI Taxonomy" id="10090"/>
    <lineage>
        <taxon>Eukaryota</taxon>
        <taxon>Metazoa</taxon>
        <taxon>Chordata</taxon>
        <taxon>Craniata</taxon>
        <taxon>Vertebrata</taxon>
        <taxon>Euteleostomi</taxon>
        <taxon>Mammalia</taxon>
        <taxon>Eutheria</taxon>
        <taxon>Euarchontoglires</taxon>
        <taxon>Glires</taxon>
        <taxon>Rodentia</taxon>
        <taxon>Myomorpha</taxon>
        <taxon>Muroidea</taxon>
        <taxon>Muridae</taxon>
        <taxon>Murinae</taxon>
        <taxon>Mus</taxon>
        <taxon>Mus</taxon>
    </lineage>
</organism>
<proteinExistence type="evidence at protein level"/>